<gene>
    <name evidence="1" type="primary">tsaD</name>
    <name type="synonym">gcp</name>
    <name type="ordered locus">ESA_00358</name>
</gene>
<proteinExistence type="inferred from homology"/>
<comment type="function">
    <text evidence="1">Required for the formation of a threonylcarbamoyl group on adenosine at position 37 (t(6)A37) in tRNAs that read codons beginning with adenine. Is involved in the transfer of the threonylcarbamoyl moiety of threonylcarbamoyl-AMP (TC-AMP) to the N6 group of A37, together with TsaE and TsaB. TsaD likely plays a direct catalytic role in this reaction.</text>
</comment>
<comment type="catalytic activity">
    <reaction evidence="1">
        <text>L-threonylcarbamoyladenylate + adenosine(37) in tRNA = N(6)-L-threonylcarbamoyladenosine(37) in tRNA + AMP + H(+)</text>
        <dbReference type="Rhea" id="RHEA:37059"/>
        <dbReference type="Rhea" id="RHEA-COMP:10162"/>
        <dbReference type="Rhea" id="RHEA-COMP:10163"/>
        <dbReference type="ChEBI" id="CHEBI:15378"/>
        <dbReference type="ChEBI" id="CHEBI:73682"/>
        <dbReference type="ChEBI" id="CHEBI:74411"/>
        <dbReference type="ChEBI" id="CHEBI:74418"/>
        <dbReference type="ChEBI" id="CHEBI:456215"/>
        <dbReference type="EC" id="2.3.1.234"/>
    </reaction>
</comment>
<comment type="cofactor">
    <cofactor evidence="1">
        <name>Fe(2+)</name>
        <dbReference type="ChEBI" id="CHEBI:29033"/>
    </cofactor>
    <text evidence="1">Binds 1 Fe(2+) ion per subunit.</text>
</comment>
<comment type="subcellular location">
    <subcellularLocation>
        <location evidence="1">Cytoplasm</location>
    </subcellularLocation>
</comment>
<comment type="similarity">
    <text evidence="1">Belongs to the KAE1 / TsaD family.</text>
</comment>
<keyword id="KW-0012">Acyltransferase</keyword>
<keyword id="KW-0963">Cytoplasm</keyword>
<keyword id="KW-0408">Iron</keyword>
<keyword id="KW-0479">Metal-binding</keyword>
<keyword id="KW-1185">Reference proteome</keyword>
<keyword id="KW-0808">Transferase</keyword>
<keyword id="KW-0819">tRNA processing</keyword>
<protein>
    <recommendedName>
        <fullName evidence="1">tRNA N6-adenosine threonylcarbamoyltransferase</fullName>
        <ecNumber evidence="1">2.3.1.234</ecNumber>
    </recommendedName>
    <alternativeName>
        <fullName evidence="1">N6-L-threonylcarbamoyladenine synthase</fullName>
        <shortName evidence="1">t(6)A synthase</shortName>
    </alternativeName>
    <alternativeName>
        <fullName evidence="1">t(6)A37 threonylcarbamoyladenosine biosynthesis protein TsaD</fullName>
    </alternativeName>
    <alternativeName>
        <fullName evidence="1">tRNA threonylcarbamoyladenosine biosynthesis protein TsaD</fullName>
    </alternativeName>
</protein>
<evidence type="ECO:0000255" key="1">
    <source>
        <dbReference type="HAMAP-Rule" id="MF_01445"/>
    </source>
</evidence>
<sequence length="337" mass="35948">MRVLGIETSCDETGIAIYDDENGLLANQLYSQVKLHADYGGVVPELASRDHVRKTVPLIQAAIKEAGLTAKDIDAVAYTAGPGLVGALLVGATVGRALAFAWDVPAVPVHHMEGHLLAPMLEDNPPEFPFVALLVSGGHTQLISVTGIGQYELLGESIDDAAGEAFDKTAKLLGLDYPGGPMLSKMAAQGTAGRFTFPRPMTDRPGLDFSFSGLKTFAANTIRDNGTDDQTRADIARAFEDAVVDTLMIKCRRALDQTGFKRLVMAGGVSANRTLRARLAEMMQKRGGEVFYARPEFCTDNGAMIAYAGMVRLKAKGEAGLGVTVRPRWPLSELPAA</sequence>
<organism>
    <name type="scientific">Cronobacter sakazakii (strain ATCC BAA-894)</name>
    <name type="common">Enterobacter sakazakii</name>
    <dbReference type="NCBI Taxonomy" id="290339"/>
    <lineage>
        <taxon>Bacteria</taxon>
        <taxon>Pseudomonadati</taxon>
        <taxon>Pseudomonadota</taxon>
        <taxon>Gammaproteobacteria</taxon>
        <taxon>Enterobacterales</taxon>
        <taxon>Enterobacteriaceae</taxon>
        <taxon>Cronobacter</taxon>
    </lineage>
</organism>
<feature type="chain" id="PRO_1000024434" description="tRNA N6-adenosine threonylcarbamoyltransferase">
    <location>
        <begin position="1"/>
        <end position="337"/>
    </location>
</feature>
<feature type="binding site" evidence="1">
    <location>
        <position position="111"/>
    </location>
    <ligand>
        <name>Fe cation</name>
        <dbReference type="ChEBI" id="CHEBI:24875"/>
    </ligand>
</feature>
<feature type="binding site" evidence="1">
    <location>
        <position position="115"/>
    </location>
    <ligand>
        <name>Fe cation</name>
        <dbReference type="ChEBI" id="CHEBI:24875"/>
    </ligand>
</feature>
<feature type="binding site" evidence="1">
    <location>
        <begin position="134"/>
        <end position="138"/>
    </location>
    <ligand>
        <name>substrate</name>
    </ligand>
</feature>
<feature type="binding site" evidence="1">
    <location>
        <position position="167"/>
    </location>
    <ligand>
        <name>substrate</name>
    </ligand>
</feature>
<feature type="binding site" evidence="1">
    <location>
        <position position="180"/>
    </location>
    <ligand>
        <name>substrate</name>
    </ligand>
</feature>
<feature type="binding site" evidence="1">
    <location>
        <position position="272"/>
    </location>
    <ligand>
        <name>substrate</name>
    </ligand>
</feature>
<feature type="binding site" evidence="1">
    <location>
        <position position="300"/>
    </location>
    <ligand>
        <name>Fe cation</name>
        <dbReference type="ChEBI" id="CHEBI:24875"/>
    </ligand>
</feature>
<name>TSAD_CROS8</name>
<accession>A7MJU0</accession>
<reference key="1">
    <citation type="journal article" date="2010" name="PLoS ONE">
        <title>Genome sequence of Cronobacter sakazakii BAA-894 and comparative genomic hybridization analysis with other Cronobacter species.</title>
        <authorList>
            <person name="Kucerova E."/>
            <person name="Clifton S.W."/>
            <person name="Xia X.Q."/>
            <person name="Long F."/>
            <person name="Porwollik S."/>
            <person name="Fulton L."/>
            <person name="Fronick C."/>
            <person name="Minx P."/>
            <person name="Kyung K."/>
            <person name="Warren W."/>
            <person name="Fulton R."/>
            <person name="Feng D."/>
            <person name="Wollam A."/>
            <person name="Shah N."/>
            <person name="Bhonagiri V."/>
            <person name="Nash W.E."/>
            <person name="Hallsworth-Pepin K."/>
            <person name="Wilson R.K."/>
            <person name="McClelland M."/>
            <person name="Forsythe S.J."/>
        </authorList>
    </citation>
    <scope>NUCLEOTIDE SEQUENCE [LARGE SCALE GENOMIC DNA]</scope>
    <source>
        <strain>ATCC BAA-894</strain>
    </source>
</reference>
<dbReference type="EC" id="2.3.1.234" evidence="1"/>
<dbReference type="EMBL" id="CP000783">
    <property type="protein sequence ID" value="ABU75656.1"/>
    <property type="molecule type" value="Genomic_DNA"/>
</dbReference>
<dbReference type="RefSeq" id="WP_007778149.1">
    <property type="nucleotide sequence ID" value="NC_009778.1"/>
</dbReference>
<dbReference type="SMR" id="A7MJU0"/>
<dbReference type="GeneID" id="56733315"/>
<dbReference type="KEGG" id="esa:ESA_00358"/>
<dbReference type="HOGENOM" id="CLU_023208_0_2_6"/>
<dbReference type="Proteomes" id="UP000000260">
    <property type="component" value="Chromosome"/>
</dbReference>
<dbReference type="GO" id="GO:0005737">
    <property type="term" value="C:cytoplasm"/>
    <property type="evidence" value="ECO:0007669"/>
    <property type="project" value="UniProtKB-SubCell"/>
</dbReference>
<dbReference type="GO" id="GO:0005506">
    <property type="term" value="F:iron ion binding"/>
    <property type="evidence" value="ECO:0007669"/>
    <property type="project" value="UniProtKB-UniRule"/>
</dbReference>
<dbReference type="GO" id="GO:0061711">
    <property type="term" value="F:N(6)-L-threonylcarbamoyladenine synthase activity"/>
    <property type="evidence" value="ECO:0007669"/>
    <property type="project" value="UniProtKB-EC"/>
</dbReference>
<dbReference type="GO" id="GO:0002949">
    <property type="term" value="P:tRNA threonylcarbamoyladenosine modification"/>
    <property type="evidence" value="ECO:0007669"/>
    <property type="project" value="UniProtKB-UniRule"/>
</dbReference>
<dbReference type="CDD" id="cd24097">
    <property type="entry name" value="ASKHA_NBD_TsaD-like"/>
    <property type="match status" value="1"/>
</dbReference>
<dbReference type="FunFam" id="3.30.420.40:FF:000031">
    <property type="entry name" value="tRNA N6-adenosine threonylcarbamoyltransferase"/>
    <property type="match status" value="1"/>
</dbReference>
<dbReference type="Gene3D" id="3.30.420.40">
    <property type="match status" value="2"/>
</dbReference>
<dbReference type="HAMAP" id="MF_01445">
    <property type="entry name" value="TsaD"/>
    <property type="match status" value="1"/>
</dbReference>
<dbReference type="InterPro" id="IPR043129">
    <property type="entry name" value="ATPase_NBD"/>
</dbReference>
<dbReference type="InterPro" id="IPR000905">
    <property type="entry name" value="Gcp-like_dom"/>
</dbReference>
<dbReference type="InterPro" id="IPR017861">
    <property type="entry name" value="KAE1/TsaD"/>
</dbReference>
<dbReference type="InterPro" id="IPR017860">
    <property type="entry name" value="Peptidase_M22_CS"/>
</dbReference>
<dbReference type="InterPro" id="IPR022450">
    <property type="entry name" value="TsaD"/>
</dbReference>
<dbReference type="NCBIfam" id="TIGR00329">
    <property type="entry name" value="gcp_kae1"/>
    <property type="match status" value="1"/>
</dbReference>
<dbReference type="NCBIfam" id="TIGR03723">
    <property type="entry name" value="T6A_TsaD_YgjD"/>
    <property type="match status" value="1"/>
</dbReference>
<dbReference type="PANTHER" id="PTHR11735">
    <property type="entry name" value="TRNA N6-ADENOSINE THREONYLCARBAMOYLTRANSFERASE"/>
    <property type="match status" value="1"/>
</dbReference>
<dbReference type="PANTHER" id="PTHR11735:SF6">
    <property type="entry name" value="TRNA N6-ADENOSINE THREONYLCARBAMOYLTRANSFERASE, MITOCHONDRIAL"/>
    <property type="match status" value="1"/>
</dbReference>
<dbReference type="Pfam" id="PF00814">
    <property type="entry name" value="TsaD"/>
    <property type="match status" value="1"/>
</dbReference>
<dbReference type="PRINTS" id="PR00789">
    <property type="entry name" value="OSIALOPTASE"/>
</dbReference>
<dbReference type="SUPFAM" id="SSF53067">
    <property type="entry name" value="Actin-like ATPase domain"/>
    <property type="match status" value="1"/>
</dbReference>
<dbReference type="PROSITE" id="PS01016">
    <property type="entry name" value="GLYCOPROTEASE"/>
    <property type="match status" value="1"/>
</dbReference>